<sequence length="319" mass="36555">MNFQELIMTLQRFWAEQNCVIQQPYDLEKGAGTMNPATFLRVLGPEPWRVAYVEPSRRPTDGRYGENPNRLQHYYQYQVILKPSPDNVQDLYLQSLEAMGINPLEHDIRFVEDNWESPTLGAWGLGWEVWLDGMEITQFTYFQQCGGFDCHPVSAEITYGLERLAMYIQQVNSVYDIEWVDGITYGDIHHQTEVDYSHYNFTFADTAMLFNLFNAYEAEAMRVVEQGLVQPAYDYTLKCSHTFNLLDARGAISVTERTAYIGRVRHLARLCAAAYLEQRQKLGYPLLKARQQQPEAPAPGPAAVVGGRDRKDACDVKEG</sequence>
<proteinExistence type="inferred from homology"/>
<accession>Q2RKV6</accession>
<keyword id="KW-0030">Aminoacyl-tRNA synthetase</keyword>
<keyword id="KW-0067">ATP-binding</keyword>
<keyword id="KW-0963">Cytoplasm</keyword>
<keyword id="KW-0436">Ligase</keyword>
<keyword id="KW-0547">Nucleotide-binding</keyword>
<keyword id="KW-0648">Protein biosynthesis</keyword>
<gene>
    <name evidence="1" type="primary">glyQ</name>
    <name type="ordered locus">Moth_0603</name>
</gene>
<dbReference type="EC" id="6.1.1.14" evidence="1"/>
<dbReference type="EMBL" id="CP000232">
    <property type="protein sequence ID" value="ABC18933.1"/>
    <property type="molecule type" value="Genomic_DNA"/>
</dbReference>
<dbReference type="RefSeq" id="YP_429476.1">
    <property type="nucleotide sequence ID" value="NC_007644.1"/>
</dbReference>
<dbReference type="SMR" id="Q2RKV6"/>
<dbReference type="STRING" id="264732.Moth_0603"/>
<dbReference type="EnsemblBacteria" id="ABC18933">
    <property type="protein sequence ID" value="ABC18933"/>
    <property type="gene ID" value="Moth_0603"/>
</dbReference>
<dbReference type="KEGG" id="mta:Moth_0603"/>
<dbReference type="PATRIC" id="fig|264732.11.peg.648"/>
<dbReference type="eggNOG" id="COG0752">
    <property type="taxonomic scope" value="Bacteria"/>
</dbReference>
<dbReference type="HOGENOM" id="CLU_057066_1_0_9"/>
<dbReference type="OrthoDB" id="9802183at2"/>
<dbReference type="GO" id="GO:0005829">
    <property type="term" value="C:cytosol"/>
    <property type="evidence" value="ECO:0007669"/>
    <property type="project" value="TreeGrafter"/>
</dbReference>
<dbReference type="GO" id="GO:0005524">
    <property type="term" value="F:ATP binding"/>
    <property type="evidence" value="ECO:0007669"/>
    <property type="project" value="UniProtKB-UniRule"/>
</dbReference>
<dbReference type="GO" id="GO:0140096">
    <property type="term" value="F:catalytic activity, acting on a protein"/>
    <property type="evidence" value="ECO:0007669"/>
    <property type="project" value="UniProtKB-ARBA"/>
</dbReference>
<dbReference type="GO" id="GO:0004820">
    <property type="term" value="F:glycine-tRNA ligase activity"/>
    <property type="evidence" value="ECO:0007669"/>
    <property type="project" value="UniProtKB-UniRule"/>
</dbReference>
<dbReference type="GO" id="GO:0016740">
    <property type="term" value="F:transferase activity"/>
    <property type="evidence" value="ECO:0007669"/>
    <property type="project" value="UniProtKB-ARBA"/>
</dbReference>
<dbReference type="GO" id="GO:0006426">
    <property type="term" value="P:glycyl-tRNA aminoacylation"/>
    <property type="evidence" value="ECO:0007669"/>
    <property type="project" value="UniProtKB-UniRule"/>
</dbReference>
<dbReference type="CDD" id="cd00733">
    <property type="entry name" value="GlyRS_alpha_core"/>
    <property type="match status" value="1"/>
</dbReference>
<dbReference type="FunFam" id="3.30.930.10:FF:000006">
    <property type="entry name" value="Glycine--tRNA ligase alpha subunit"/>
    <property type="match status" value="1"/>
</dbReference>
<dbReference type="Gene3D" id="3.30.930.10">
    <property type="entry name" value="Bira Bifunctional Protein, Domain 2"/>
    <property type="match status" value="1"/>
</dbReference>
<dbReference type="Gene3D" id="1.20.58.180">
    <property type="entry name" value="Class II aaRS and biotin synthetases, domain 2"/>
    <property type="match status" value="1"/>
</dbReference>
<dbReference type="HAMAP" id="MF_00254">
    <property type="entry name" value="Gly_tRNA_synth_alpha"/>
    <property type="match status" value="1"/>
</dbReference>
<dbReference type="InterPro" id="IPR045864">
    <property type="entry name" value="aa-tRNA-synth_II/BPL/LPL"/>
</dbReference>
<dbReference type="InterPro" id="IPR006194">
    <property type="entry name" value="Gly-tRNA-synth_heterodimer"/>
</dbReference>
<dbReference type="InterPro" id="IPR002310">
    <property type="entry name" value="Gly-tRNA_ligase_asu"/>
</dbReference>
<dbReference type="NCBIfam" id="TIGR00388">
    <property type="entry name" value="glyQ"/>
    <property type="match status" value="1"/>
</dbReference>
<dbReference type="NCBIfam" id="NF006827">
    <property type="entry name" value="PRK09348.1"/>
    <property type="match status" value="1"/>
</dbReference>
<dbReference type="PANTHER" id="PTHR30075:SF2">
    <property type="entry name" value="GLYCINE--TRNA LIGASE, CHLOROPLASTIC_MITOCHONDRIAL 2"/>
    <property type="match status" value="1"/>
</dbReference>
<dbReference type="PANTHER" id="PTHR30075">
    <property type="entry name" value="GLYCYL-TRNA SYNTHETASE"/>
    <property type="match status" value="1"/>
</dbReference>
<dbReference type="Pfam" id="PF02091">
    <property type="entry name" value="tRNA-synt_2e"/>
    <property type="match status" value="1"/>
</dbReference>
<dbReference type="PRINTS" id="PR01044">
    <property type="entry name" value="TRNASYNTHGA"/>
</dbReference>
<dbReference type="SUPFAM" id="SSF55681">
    <property type="entry name" value="Class II aaRS and biotin synthetases"/>
    <property type="match status" value="1"/>
</dbReference>
<dbReference type="PROSITE" id="PS50861">
    <property type="entry name" value="AA_TRNA_LIGASE_II_GLYAB"/>
    <property type="match status" value="1"/>
</dbReference>
<protein>
    <recommendedName>
        <fullName evidence="1">Glycine--tRNA ligase alpha subunit</fullName>
        <ecNumber evidence="1">6.1.1.14</ecNumber>
    </recommendedName>
    <alternativeName>
        <fullName evidence="1">Glycyl-tRNA synthetase alpha subunit</fullName>
        <shortName evidence="1">GlyRS</shortName>
    </alternativeName>
</protein>
<comment type="catalytic activity">
    <reaction evidence="1">
        <text>tRNA(Gly) + glycine + ATP = glycyl-tRNA(Gly) + AMP + diphosphate</text>
        <dbReference type="Rhea" id="RHEA:16013"/>
        <dbReference type="Rhea" id="RHEA-COMP:9664"/>
        <dbReference type="Rhea" id="RHEA-COMP:9683"/>
        <dbReference type="ChEBI" id="CHEBI:30616"/>
        <dbReference type="ChEBI" id="CHEBI:33019"/>
        <dbReference type="ChEBI" id="CHEBI:57305"/>
        <dbReference type="ChEBI" id="CHEBI:78442"/>
        <dbReference type="ChEBI" id="CHEBI:78522"/>
        <dbReference type="ChEBI" id="CHEBI:456215"/>
        <dbReference type="EC" id="6.1.1.14"/>
    </reaction>
</comment>
<comment type="subunit">
    <text evidence="1">Tetramer of two alpha and two beta subunits.</text>
</comment>
<comment type="subcellular location">
    <subcellularLocation>
        <location evidence="1">Cytoplasm</location>
    </subcellularLocation>
</comment>
<comment type="similarity">
    <text evidence="1">Belongs to the class-II aminoacyl-tRNA synthetase family.</text>
</comment>
<feature type="chain" id="PRO_1000047448" description="Glycine--tRNA ligase alpha subunit">
    <location>
        <begin position="1"/>
        <end position="319"/>
    </location>
</feature>
<feature type="region of interest" description="Disordered" evidence="2">
    <location>
        <begin position="290"/>
        <end position="319"/>
    </location>
</feature>
<feature type="compositionally biased region" description="Basic and acidic residues" evidence="2">
    <location>
        <begin position="307"/>
        <end position="319"/>
    </location>
</feature>
<evidence type="ECO:0000255" key="1">
    <source>
        <dbReference type="HAMAP-Rule" id="MF_00254"/>
    </source>
</evidence>
<evidence type="ECO:0000256" key="2">
    <source>
        <dbReference type="SAM" id="MobiDB-lite"/>
    </source>
</evidence>
<organism>
    <name type="scientific">Moorella thermoacetica (strain ATCC 39073 / JCM 9320)</name>
    <dbReference type="NCBI Taxonomy" id="264732"/>
    <lineage>
        <taxon>Bacteria</taxon>
        <taxon>Bacillati</taxon>
        <taxon>Bacillota</taxon>
        <taxon>Clostridia</taxon>
        <taxon>Moorellales</taxon>
        <taxon>Moorellaceae</taxon>
        <taxon>Moorella</taxon>
    </lineage>
</organism>
<name>SYGA_MOOTA</name>
<reference key="1">
    <citation type="journal article" date="2008" name="Environ. Microbiol.">
        <title>The complete genome sequence of Moorella thermoacetica (f. Clostridium thermoaceticum).</title>
        <authorList>
            <person name="Pierce E."/>
            <person name="Xie G."/>
            <person name="Barabote R.D."/>
            <person name="Saunders E."/>
            <person name="Han C.S."/>
            <person name="Detter J.C."/>
            <person name="Richardson P."/>
            <person name="Brettin T.S."/>
            <person name="Das A."/>
            <person name="Ljungdahl L.G."/>
            <person name="Ragsdale S.W."/>
        </authorList>
    </citation>
    <scope>NUCLEOTIDE SEQUENCE [LARGE SCALE GENOMIC DNA]</scope>
    <source>
        <strain>ATCC 39073 / JCM 9320</strain>
    </source>
</reference>